<dbReference type="EMBL" id="AC159892">
    <property type="status" value="NOT_ANNOTATED_CDS"/>
    <property type="molecule type" value="Genomic_DNA"/>
</dbReference>
<dbReference type="EMBL" id="AC161264">
    <property type="status" value="NOT_ANNOTATED_CDS"/>
    <property type="molecule type" value="Genomic_DNA"/>
</dbReference>
<dbReference type="EMBL" id="BC044665">
    <property type="protein sequence ID" value="AAH44665.1"/>
    <property type="molecule type" value="mRNA"/>
</dbReference>
<dbReference type="EMBL" id="AF016402">
    <property type="protein sequence ID" value="AAC05824.1"/>
    <property type="molecule type" value="mRNA"/>
</dbReference>
<dbReference type="CCDS" id="CCDS23196.1"/>
<dbReference type="RefSeq" id="NP_073146.2">
    <property type="nucleotide sequence ID" value="NM_022655.4"/>
</dbReference>
<dbReference type="SMR" id="Q811J3"/>
<dbReference type="BioGRID" id="211088">
    <property type="interactions" value="6"/>
</dbReference>
<dbReference type="FunCoup" id="Q811J3">
    <property type="interactions" value="1610"/>
</dbReference>
<dbReference type="STRING" id="10090.ENSMUSP00000034843"/>
<dbReference type="GlyGen" id="Q811J3">
    <property type="glycosylation" value="1 site, 1 O-linked glycan (1 site)"/>
</dbReference>
<dbReference type="iPTMnet" id="Q811J3"/>
<dbReference type="PhosphoSitePlus" id="Q811J3"/>
<dbReference type="SwissPalm" id="Q811J3"/>
<dbReference type="jPOST" id="Q811J3"/>
<dbReference type="PaxDb" id="10090-ENSMUSP00000034843"/>
<dbReference type="PeptideAtlas" id="Q811J3"/>
<dbReference type="ProteomicsDB" id="267151"/>
<dbReference type="Pumba" id="Q811J3"/>
<dbReference type="Antibodypedia" id="27620">
    <property type="antibodies" value="340 antibodies from 34 providers"/>
</dbReference>
<dbReference type="DNASU" id="64602"/>
<dbReference type="Ensembl" id="ENSMUST00000034843.9">
    <property type="protein sequence ID" value="ENSMUSP00000034843.8"/>
    <property type="gene ID" value="ENSMUSG00000032293.9"/>
</dbReference>
<dbReference type="GeneID" id="64602"/>
<dbReference type="KEGG" id="mmu:64602"/>
<dbReference type="UCSC" id="uc009prq.2">
    <property type="organism name" value="mouse"/>
</dbReference>
<dbReference type="AGR" id="MGI:1928268"/>
<dbReference type="CTD" id="3658"/>
<dbReference type="MGI" id="MGI:1928268">
    <property type="gene designation" value="Ireb2"/>
</dbReference>
<dbReference type="VEuPathDB" id="HostDB:ENSMUSG00000032293"/>
<dbReference type="eggNOG" id="KOG0452">
    <property type="taxonomic scope" value="Eukaryota"/>
</dbReference>
<dbReference type="GeneTree" id="ENSGT00940000157796"/>
<dbReference type="HOGENOM" id="CLU_013476_2_1_1"/>
<dbReference type="InParanoid" id="Q811J3"/>
<dbReference type="OMA" id="VYEPMFD"/>
<dbReference type="OrthoDB" id="2279155at2759"/>
<dbReference type="PhylomeDB" id="Q811J3"/>
<dbReference type="TreeFam" id="TF313476"/>
<dbReference type="Reactome" id="R-MMU-917937">
    <property type="pathway name" value="Iron uptake and transport"/>
</dbReference>
<dbReference type="BioGRID-ORCS" id="64602">
    <property type="hits" value="11 hits in 79 CRISPR screens"/>
</dbReference>
<dbReference type="ChiTaRS" id="Ireb2">
    <property type="organism name" value="mouse"/>
</dbReference>
<dbReference type="PRO" id="PR:Q811J3"/>
<dbReference type="Proteomes" id="UP000000589">
    <property type="component" value="Chromosome 9"/>
</dbReference>
<dbReference type="RNAct" id="Q811J3">
    <property type="molecule type" value="protein"/>
</dbReference>
<dbReference type="Bgee" id="ENSMUSG00000032293">
    <property type="expression patterns" value="Expressed in animal zygote and 260 other cell types or tissues"/>
</dbReference>
<dbReference type="ExpressionAtlas" id="Q811J3">
    <property type="expression patterns" value="baseline and differential"/>
</dbReference>
<dbReference type="GO" id="GO:0005737">
    <property type="term" value="C:cytoplasm"/>
    <property type="evidence" value="ECO:0000314"/>
    <property type="project" value="MGI"/>
</dbReference>
<dbReference type="GO" id="GO:0005829">
    <property type="term" value="C:cytosol"/>
    <property type="evidence" value="ECO:0000314"/>
    <property type="project" value="MGI"/>
</dbReference>
<dbReference type="GO" id="GO:0005783">
    <property type="term" value="C:endoplasmic reticulum"/>
    <property type="evidence" value="ECO:0000266"/>
    <property type="project" value="MGI"/>
</dbReference>
<dbReference type="GO" id="GO:0005794">
    <property type="term" value="C:Golgi apparatus"/>
    <property type="evidence" value="ECO:0000266"/>
    <property type="project" value="MGI"/>
</dbReference>
<dbReference type="GO" id="GO:0005739">
    <property type="term" value="C:mitochondrion"/>
    <property type="evidence" value="ECO:0007005"/>
    <property type="project" value="MGI"/>
</dbReference>
<dbReference type="GO" id="GO:0051539">
    <property type="term" value="F:4 iron, 4 sulfur cluster binding"/>
    <property type="evidence" value="ECO:0007669"/>
    <property type="project" value="UniProtKB-KW"/>
</dbReference>
<dbReference type="GO" id="GO:0030350">
    <property type="term" value="F:iron-responsive element binding"/>
    <property type="evidence" value="ECO:0000314"/>
    <property type="project" value="MGI"/>
</dbReference>
<dbReference type="GO" id="GO:0046872">
    <property type="term" value="F:metal ion binding"/>
    <property type="evidence" value="ECO:0007669"/>
    <property type="project" value="UniProtKB-KW"/>
</dbReference>
<dbReference type="GO" id="GO:0030371">
    <property type="term" value="F:translation repressor activity"/>
    <property type="evidence" value="ECO:0000304"/>
    <property type="project" value="MGI"/>
</dbReference>
<dbReference type="GO" id="GO:0034101">
    <property type="term" value="P:erythrocyte homeostasis"/>
    <property type="evidence" value="ECO:0000315"/>
    <property type="project" value="MGI"/>
</dbReference>
<dbReference type="GO" id="GO:0050892">
    <property type="term" value="P:intestinal absorption"/>
    <property type="evidence" value="ECO:0000316"/>
    <property type="project" value="MGI"/>
</dbReference>
<dbReference type="GO" id="GO:0006879">
    <property type="term" value="P:intracellular iron ion homeostasis"/>
    <property type="evidence" value="ECO:0000314"/>
    <property type="project" value="MGI"/>
</dbReference>
<dbReference type="GO" id="GO:0060586">
    <property type="term" value="P:multicellular organismal-level iron ion homeostasis"/>
    <property type="evidence" value="ECO:0000316"/>
    <property type="project" value="MGI"/>
</dbReference>
<dbReference type="GO" id="GO:0030316">
    <property type="term" value="P:osteoclast differentiation"/>
    <property type="evidence" value="ECO:0000270"/>
    <property type="project" value="DFLAT"/>
</dbReference>
<dbReference type="GO" id="GO:0009791">
    <property type="term" value="P:post-embryonic development"/>
    <property type="evidence" value="ECO:0000316"/>
    <property type="project" value="MGI"/>
</dbReference>
<dbReference type="GO" id="GO:0006782">
    <property type="term" value="P:protoporphyrinogen IX biosynthetic process"/>
    <property type="evidence" value="ECO:0000315"/>
    <property type="project" value="MGI"/>
</dbReference>
<dbReference type="GO" id="GO:0010468">
    <property type="term" value="P:regulation of gene expression"/>
    <property type="evidence" value="ECO:0000316"/>
    <property type="project" value="MGI"/>
</dbReference>
<dbReference type="GO" id="GO:0006417">
    <property type="term" value="P:regulation of translation"/>
    <property type="evidence" value="ECO:0000315"/>
    <property type="project" value="MGI"/>
</dbReference>
<dbReference type="CDD" id="cd01586">
    <property type="entry name" value="AcnA_IRP"/>
    <property type="match status" value="1"/>
</dbReference>
<dbReference type="CDD" id="cd01580">
    <property type="entry name" value="AcnA_IRP_Swivel"/>
    <property type="match status" value="1"/>
</dbReference>
<dbReference type="FunFam" id="3.30.499.10:FF:000005">
    <property type="entry name" value="cytoplasmic aconitate hydratase"/>
    <property type="match status" value="1"/>
</dbReference>
<dbReference type="FunFam" id="3.30.499.10:FF:000011">
    <property type="entry name" value="Iron-responsive element binding protein 2"/>
    <property type="match status" value="1"/>
</dbReference>
<dbReference type="FunFam" id="3.30.499.10:FF:000012">
    <property type="entry name" value="Iron-responsive element binding protein 2"/>
    <property type="match status" value="1"/>
</dbReference>
<dbReference type="FunFam" id="3.20.19.10:FF:000005">
    <property type="entry name" value="Iron-responsive element-binding protein 2"/>
    <property type="match status" value="1"/>
</dbReference>
<dbReference type="Gene3D" id="6.10.190.10">
    <property type="match status" value="1"/>
</dbReference>
<dbReference type="Gene3D" id="3.30.499.10">
    <property type="entry name" value="Aconitase, domain 3"/>
    <property type="match status" value="3"/>
</dbReference>
<dbReference type="Gene3D" id="3.20.19.10">
    <property type="entry name" value="Aconitase, domain 4"/>
    <property type="match status" value="1"/>
</dbReference>
<dbReference type="InterPro" id="IPR044137">
    <property type="entry name" value="AcnA_IRP_Swivel"/>
</dbReference>
<dbReference type="InterPro" id="IPR015931">
    <property type="entry name" value="Acnase/IPM_dHydase_lsu_aba_1/3"/>
</dbReference>
<dbReference type="InterPro" id="IPR001030">
    <property type="entry name" value="Acoase/IPM_deHydtase_lsu_aba"/>
</dbReference>
<dbReference type="InterPro" id="IPR015928">
    <property type="entry name" value="Aconitase/3IPM_dehydase_swvl"/>
</dbReference>
<dbReference type="InterPro" id="IPR006249">
    <property type="entry name" value="Aconitase/IRP2"/>
</dbReference>
<dbReference type="InterPro" id="IPR018136">
    <property type="entry name" value="Aconitase_4Fe-4S_BS"/>
</dbReference>
<dbReference type="InterPro" id="IPR036008">
    <property type="entry name" value="Aconitase_4Fe-4S_dom"/>
</dbReference>
<dbReference type="InterPro" id="IPR000573">
    <property type="entry name" value="AconitaseA/IPMdHydase_ssu_swvl"/>
</dbReference>
<dbReference type="NCBIfam" id="TIGR01341">
    <property type="entry name" value="aconitase_1"/>
    <property type="match status" value="1"/>
</dbReference>
<dbReference type="NCBIfam" id="NF006757">
    <property type="entry name" value="PRK09277.1"/>
    <property type="match status" value="1"/>
</dbReference>
<dbReference type="NCBIfam" id="NF009520">
    <property type="entry name" value="PRK12881.1"/>
    <property type="match status" value="1"/>
</dbReference>
<dbReference type="PANTHER" id="PTHR11670">
    <property type="entry name" value="ACONITASE/IRON-RESPONSIVE ELEMENT FAMILY MEMBER"/>
    <property type="match status" value="1"/>
</dbReference>
<dbReference type="Pfam" id="PF00330">
    <property type="entry name" value="Aconitase"/>
    <property type="match status" value="2"/>
</dbReference>
<dbReference type="Pfam" id="PF00694">
    <property type="entry name" value="Aconitase_C"/>
    <property type="match status" value="1"/>
</dbReference>
<dbReference type="PRINTS" id="PR00415">
    <property type="entry name" value="ACONITASE"/>
</dbReference>
<dbReference type="SUPFAM" id="SSF53732">
    <property type="entry name" value="Aconitase iron-sulfur domain"/>
    <property type="match status" value="1"/>
</dbReference>
<dbReference type="SUPFAM" id="SSF52016">
    <property type="entry name" value="LeuD/IlvD-like"/>
    <property type="match status" value="1"/>
</dbReference>
<dbReference type="PROSITE" id="PS00450">
    <property type="entry name" value="ACONITASE_1"/>
    <property type="match status" value="1"/>
</dbReference>
<dbReference type="PROSITE" id="PS01244">
    <property type="entry name" value="ACONITASE_2"/>
    <property type="match status" value="1"/>
</dbReference>
<gene>
    <name type="primary">Ireb2</name>
    <name type="synonym">Irp2</name>
</gene>
<keyword id="KW-0004">4Fe-4S</keyword>
<keyword id="KW-0963">Cytoplasm</keyword>
<keyword id="KW-0408">Iron</keyword>
<keyword id="KW-0411">Iron-sulfur</keyword>
<keyword id="KW-0479">Metal-binding</keyword>
<keyword id="KW-1185">Reference proteome</keyword>
<keyword id="KW-0694">RNA-binding</keyword>
<keyword id="KW-0832">Ubl conjugation</keyword>
<comment type="function">
    <text evidence="2">RNA-binding protein that binds to iron-responsive elements (IRES), which are stem-loop structures found in the 5'-UTR of ferritin, and delta aminolevulinic acid synthase mRNAs, and in the 3'-UTR of transferrin receptor mRNA. Binding to the IRE element in ferritin results in the repression of its mRNA translation. Binding of the protein to the transferrin receptor mRNA inhibits the degradation of this otherwise rapidly degraded mRNA.</text>
</comment>
<comment type="cofactor">
    <cofactor evidence="1">
        <name>[4Fe-4S] cluster</name>
        <dbReference type="ChEBI" id="CHEBI:49883"/>
    </cofactor>
    <text evidence="1">Binds 1 [4Fe-4S] cluster per subunit. [4Fe-4S]-binding affects RNA-binding activity, thereby inhibiting activity of the protein.</text>
</comment>
<comment type="subunit">
    <text evidence="2 3">Interacts with RBCK1 only in iron-rich conditions. Interacts (when associated with the 4Fe-4S) with FBXL5 (By similarity). Interacts with CIAO1 and CIAO2A (PubMed:23891004).</text>
</comment>
<comment type="subcellular location">
    <subcellularLocation>
        <location evidence="1">Cytoplasm</location>
    </subcellularLocation>
</comment>
<comment type="PTM">
    <text evidence="1">Ubiquitinated and degraded by the proteasome in presence of high level of iron and oxygen. Ubiquitinated by a SCF complex containing FBXL5. Upon iron and oxygen depletion FBXL5 is degraded, preventing ubiquitination and allowing its RNA-binding activity (By similarity).</text>
</comment>
<comment type="similarity">
    <text evidence="4">Belongs to the aconitase/IPM isomerase family.</text>
</comment>
<feature type="chain" id="PRO_0000076685" description="Iron-responsive element-binding protein 2">
    <location>
        <begin position="1"/>
        <end position="963"/>
    </location>
</feature>
<feature type="binding site" evidence="1">
    <location>
        <position position="512"/>
    </location>
    <ligand>
        <name>[4Fe-4S] cluster</name>
        <dbReference type="ChEBI" id="CHEBI:49883"/>
    </ligand>
</feature>
<feature type="binding site" evidence="1">
    <location>
        <position position="578"/>
    </location>
    <ligand>
        <name>[4Fe-4S] cluster</name>
        <dbReference type="ChEBI" id="CHEBI:49883"/>
    </ligand>
</feature>
<feature type="binding site" evidence="1">
    <location>
        <position position="581"/>
    </location>
    <ligand>
        <name>[4Fe-4S] cluster</name>
        <dbReference type="ChEBI" id="CHEBI:49883"/>
    </ligand>
</feature>
<feature type="sequence conflict" description="In Ref. 2; AAH44665." evidence="4" ref="2">
    <original>V</original>
    <variation>D</variation>
    <location>
        <position position="621"/>
    </location>
</feature>
<organism>
    <name type="scientific">Mus musculus</name>
    <name type="common">Mouse</name>
    <dbReference type="NCBI Taxonomy" id="10090"/>
    <lineage>
        <taxon>Eukaryota</taxon>
        <taxon>Metazoa</taxon>
        <taxon>Chordata</taxon>
        <taxon>Craniata</taxon>
        <taxon>Vertebrata</taxon>
        <taxon>Euteleostomi</taxon>
        <taxon>Mammalia</taxon>
        <taxon>Eutheria</taxon>
        <taxon>Euarchontoglires</taxon>
        <taxon>Glires</taxon>
        <taxon>Rodentia</taxon>
        <taxon>Myomorpha</taxon>
        <taxon>Muroidea</taxon>
        <taxon>Muridae</taxon>
        <taxon>Murinae</taxon>
        <taxon>Mus</taxon>
        <taxon>Mus</taxon>
    </lineage>
</organism>
<proteinExistence type="evidence at protein level"/>
<name>IREB2_MOUSE</name>
<reference key="1">
    <citation type="journal article" date="2009" name="PLoS Biol.">
        <title>Lineage-specific biology revealed by a finished genome assembly of the mouse.</title>
        <authorList>
            <person name="Church D.M."/>
            <person name="Goodstadt L."/>
            <person name="Hillier L.W."/>
            <person name="Zody M.C."/>
            <person name="Goldstein S."/>
            <person name="She X."/>
            <person name="Bult C.J."/>
            <person name="Agarwala R."/>
            <person name="Cherry J.L."/>
            <person name="DiCuccio M."/>
            <person name="Hlavina W."/>
            <person name="Kapustin Y."/>
            <person name="Meric P."/>
            <person name="Maglott D."/>
            <person name="Birtle Z."/>
            <person name="Marques A.C."/>
            <person name="Graves T."/>
            <person name="Zhou S."/>
            <person name="Teague B."/>
            <person name="Potamousis K."/>
            <person name="Churas C."/>
            <person name="Place M."/>
            <person name="Herschleb J."/>
            <person name="Runnheim R."/>
            <person name="Forrest D."/>
            <person name="Amos-Landgraf J."/>
            <person name="Schwartz D.C."/>
            <person name="Cheng Z."/>
            <person name="Lindblad-Toh K."/>
            <person name="Eichler E.E."/>
            <person name="Ponting C.P."/>
        </authorList>
    </citation>
    <scope>NUCLEOTIDE SEQUENCE [LARGE SCALE GENOMIC DNA]</scope>
    <source>
        <strain>C57BL/6J</strain>
    </source>
</reference>
<reference key="2">
    <citation type="journal article" date="2004" name="Genome Res.">
        <title>The status, quality, and expansion of the NIH full-length cDNA project: the Mammalian Gene Collection (MGC).</title>
        <authorList>
            <consortium name="The MGC Project Team"/>
        </authorList>
    </citation>
    <scope>NUCLEOTIDE SEQUENCE [LARGE SCALE MRNA]</scope>
    <source>
        <strain>FVB/N</strain>
        <tissue>Mammary tumor</tissue>
    </source>
</reference>
<reference key="3">
    <citation type="journal article" date="1997" name="Proc. Natl. Acad. Sci. U.S.A.">
        <title>Iron regulatory protein 1 is not required for the modulation of ferritin and transferrin receptor expression by iron in a murine pro-B lymphocyte cell line.</title>
        <authorList>
            <person name="Schalinske K.L."/>
            <person name="Blemings K.P."/>
            <person name="Steffen D.W."/>
            <person name="Chen O.S."/>
            <person name="Eisenstein R.S."/>
        </authorList>
    </citation>
    <scope>NUCLEOTIDE SEQUENCE [MRNA] OF 140-214</scope>
</reference>
<reference key="4">
    <citation type="journal article" date="2010" name="Cell">
        <title>A tissue-specific atlas of mouse protein phosphorylation and expression.</title>
        <authorList>
            <person name="Huttlin E.L."/>
            <person name="Jedrychowski M.P."/>
            <person name="Elias J.E."/>
            <person name="Goswami T."/>
            <person name="Rad R."/>
            <person name="Beausoleil S.A."/>
            <person name="Villen J."/>
            <person name="Haas W."/>
            <person name="Sowa M.E."/>
            <person name="Gygi S.P."/>
        </authorList>
    </citation>
    <scope>IDENTIFICATION BY MASS SPECTROMETRY [LARGE SCALE ANALYSIS]</scope>
    <source>
        <tissue>Kidney</tissue>
        <tissue>Spleen</tissue>
        <tissue>Testis</tissue>
    </source>
</reference>
<reference key="5">
    <citation type="journal article" date="2013" name="Cell Metab.">
        <title>Human CIA2A-FAM96A and CIA2B-FAM96B integrate iron homeostasis and maturation of different subsets of cytosolic-nuclear iron-sulfur proteins.</title>
        <authorList>
            <person name="Stehling O."/>
            <person name="Mascarenhas J."/>
            <person name="Vashisht A.A."/>
            <person name="Sheftel A.D."/>
            <person name="Niggemeyer B."/>
            <person name="Roesser R."/>
            <person name="Pierik A.J."/>
            <person name="Wohlschlegel J.A."/>
            <person name="Lill R."/>
        </authorList>
    </citation>
    <scope>INTERACTION WITH CIAO2A</scope>
</reference>
<evidence type="ECO:0000250" key="1"/>
<evidence type="ECO:0000250" key="2">
    <source>
        <dbReference type="UniProtKB" id="P48200"/>
    </source>
</evidence>
<evidence type="ECO:0000269" key="3">
    <source>
    </source>
</evidence>
<evidence type="ECO:0000305" key="4"/>
<sequence>MDSPSAGYTFEYLIETLNGNSQKKFFNVPKLGGTKYDILPYSIRVLLEAAVRNCDGFLMKKEDVMNILDWKTKQSNVEVPFFPARVVLQDFTGIPAMVDFAAMREAVKTLGGDPKKVHPACPTDLTVDHSLQIDFSKCAIQNAPNPGGGDLQKAGKLSPLKVQSKKLPCRGQTTCRGSCDSGELSRNSGTFSSQIENTPVLCPFHLQPVPEPETVLKNQEVEFGRNRERLQFFKWSSGAFKNVAVIPPGTGMAHQVNLEYLSRVVFEETDLLFPDSVVGTDSHITMVNGLGILGWGVGGIETEAVMLGLPVTLTLPEVVGCELTGSSNAFVTSIDIVLGITKHLRQVGVAGKFVEFFGSGVSQLSIVDRTTIANMCPEYGAILSFFPVDNVTLRHLEHTGFDKTKLESMEKYLKAVKLFRNDENSSEPEYSQVIQINLNSIVASVSGPKRPQDRVAVTDMKSDFQACLNEKVGFKGFQVAAEKQSDTVSVRYDGSEYKLSHGSVVIAAVISCTNNCNPSVMLAAGLLAKKAVEIGLRVKPYIRTSLSPGSGMVTHYLSSSGVLPYLSKLGFDIVGYGCSTCVGNTAPLSEAVLNAVKQGDLVTCGVLSGNKHFEGRLCDCVRANYLASPPLVVAYAIAGTVNIDFQTEPLGTDSTGKEIYLHDIWPSREEVHQMEEEHVILSMFKTLKEKVEMGNKRWNSLEAPDSVLFPWDVKSTYIRCPSFFDKLTKEPAASQPIENAHVLLYLGDSVTTDHISPAGSIARSSAAAKYLTNRGLTPREFNSYGARRGNDAVMTRGTFANIKLFNKFIGKPAPKTIHFPSGQTLDVFEAAELYQKEGIPLIILAGKKYGSGNSRDWAAKGPYLLGVKAVLAESYEKIHKDHLIGIGIAPLEFLPGENADSLGLSGREVFSLSFPEELFPGITLNIKTSTGKEFSVIASFANDVEITLYKHGGLLNFVARKFL</sequence>
<protein>
    <recommendedName>
        <fullName>Iron-responsive element-binding protein 2</fullName>
        <shortName>IRE-BP 2</shortName>
    </recommendedName>
    <alternativeName>
        <fullName>Iron regulatory protein 2</fullName>
        <shortName>IRP2</shortName>
    </alternativeName>
</protein>
<accession>Q811J3</accession>
<accession>E9QPM2</accession>
<accession>O70235</accession>